<feature type="chain" id="PRO_0000395812" description="Ubiquitin carboxyl-terminal hydrolase 44">
    <location>
        <begin position="1"/>
        <end position="695"/>
    </location>
</feature>
<feature type="domain" description="USP">
    <location>
        <begin position="295"/>
        <end position="684"/>
    </location>
</feature>
<feature type="zinc finger region" description="UBP-type" evidence="2">
    <location>
        <begin position="2"/>
        <end position="99"/>
    </location>
</feature>
<feature type="region of interest" description="Disordered" evidence="5">
    <location>
        <begin position="198"/>
        <end position="294"/>
    </location>
</feature>
<feature type="compositionally biased region" description="Basic residues" evidence="5">
    <location>
        <begin position="209"/>
        <end position="218"/>
    </location>
</feature>
<feature type="active site" description="Nucleophile" evidence="3 4">
    <location>
        <position position="304"/>
    </location>
</feature>
<feature type="active site" description="Proton acceptor" evidence="3 4">
    <location>
        <position position="642"/>
    </location>
</feature>
<feature type="binding site" evidence="2">
    <location>
        <position position="4"/>
    </location>
    <ligand>
        <name>Zn(2+)</name>
        <dbReference type="ChEBI" id="CHEBI:29105"/>
        <label>1</label>
    </ligand>
</feature>
<feature type="binding site" evidence="2">
    <location>
        <position position="6"/>
    </location>
    <ligand>
        <name>Zn(2+)</name>
        <dbReference type="ChEBI" id="CHEBI:29105"/>
        <label>1</label>
    </ligand>
</feature>
<feature type="binding site" evidence="2">
    <location>
        <position position="26"/>
    </location>
    <ligand>
        <name>Zn(2+)</name>
        <dbReference type="ChEBI" id="CHEBI:29105"/>
        <label>2</label>
    </ligand>
</feature>
<feature type="binding site" evidence="2">
    <location>
        <position position="29"/>
    </location>
    <ligand>
        <name>Zn(2+)</name>
        <dbReference type="ChEBI" id="CHEBI:29105"/>
        <label>2</label>
    </ligand>
</feature>
<feature type="binding site" evidence="2">
    <location>
        <position position="38"/>
    </location>
    <ligand>
        <name>Zn(2+)</name>
        <dbReference type="ChEBI" id="CHEBI:29105"/>
        <label>3</label>
    </ligand>
</feature>
<feature type="binding site" evidence="2">
    <location>
        <position position="41"/>
    </location>
    <ligand>
        <name>Zn(2+)</name>
        <dbReference type="ChEBI" id="CHEBI:29105"/>
        <label>3</label>
    </ligand>
</feature>
<feature type="binding site" evidence="2">
    <location>
        <position position="46"/>
    </location>
    <ligand>
        <name>Zn(2+)</name>
        <dbReference type="ChEBI" id="CHEBI:29105"/>
        <label>2</label>
    </ligand>
</feature>
<feature type="binding site" evidence="2">
    <location>
        <position position="53"/>
    </location>
    <ligand>
        <name>Zn(2+)</name>
        <dbReference type="ChEBI" id="CHEBI:29105"/>
        <label>2</label>
    </ligand>
</feature>
<feature type="binding site" evidence="2">
    <location>
        <position position="57"/>
    </location>
    <ligand>
        <name>Zn(2+)</name>
        <dbReference type="ChEBI" id="CHEBI:29105"/>
        <label>3</label>
    </ligand>
</feature>
<feature type="binding site" evidence="2">
    <location>
        <position position="63"/>
    </location>
    <ligand>
        <name>Zn(2+)</name>
        <dbReference type="ChEBI" id="CHEBI:29105"/>
        <label>3</label>
    </ligand>
</feature>
<feature type="binding site" evidence="2">
    <location>
        <position position="76"/>
    </location>
    <ligand>
        <name>Zn(2+)</name>
        <dbReference type="ChEBI" id="CHEBI:29105"/>
        <label>1</label>
    </ligand>
</feature>
<feature type="binding site" evidence="2">
    <location>
        <position position="79"/>
    </location>
    <ligand>
        <name>Zn(2+)</name>
        <dbReference type="ChEBI" id="CHEBI:29105"/>
        <label>1</label>
    </ligand>
</feature>
<evidence type="ECO:0000250" key="1"/>
<evidence type="ECO:0000255" key="2">
    <source>
        <dbReference type="PROSITE-ProRule" id="PRU00502"/>
    </source>
</evidence>
<evidence type="ECO:0000255" key="3">
    <source>
        <dbReference type="PROSITE-ProRule" id="PRU10092"/>
    </source>
</evidence>
<evidence type="ECO:0000255" key="4">
    <source>
        <dbReference type="PROSITE-ProRule" id="PRU10093"/>
    </source>
</evidence>
<evidence type="ECO:0000256" key="5">
    <source>
        <dbReference type="SAM" id="MobiDB-lite"/>
    </source>
</evidence>
<evidence type="ECO:0000305" key="6"/>
<dbReference type="EC" id="3.4.19.12"/>
<dbReference type="EMBL" id="BC048060">
    <property type="protein sequence ID" value="AAH48060.1"/>
    <property type="molecule type" value="mRNA"/>
</dbReference>
<dbReference type="RefSeq" id="NP_956551.1">
    <property type="nucleotide sequence ID" value="NM_200257.1"/>
</dbReference>
<dbReference type="SMR" id="Q7ZUM8"/>
<dbReference type="FunCoup" id="Q7ZUM8">
    <property type="interactions" value="3"/>
</dbReference>
<dbReference type="STRING" id="7955.ENSDARP00000104741"/>
<dbReference type="MEROPS" id="C19.057"/>
<dbReference type="PaxDb" id="7955-ENSDARP00000104741"/>
<dbReference type="GeneID" id="393227"/>
<dbReference type="KEGG" id="dre:393227"/>
<dbReference type="AGR" id="ZFIN:ZDB-GENE-040426-774"/>
<dbReference type="CTD" id="84101"/>
<dbReference type="ZFIN" id="ZDB-GENE-040426-774">
    <property type="gene designation" value="usp44"/>
</dbReference>
<dbReference type="eggNOG" id="KOG1867">
    <property type="taxonomic scope" value="Eukaryota"/>
</dbReference>
<dbReference type="InParanoid" id="Q7ZUM8"/>
<dbReference type="OrthoDB" id="21192at2759"/>
<dbReference type="PhylomeDB" id="Q7ZUM8"/>
<dbReference type="Reactome" id="R-DRE-5689880">
    <property type="pathway name" value="Ub-specific processing proteases"/>
</dbReference>
<dbReference type="PRO" id="PR:Q7ZUM8"/>
<dbReference type="Proteomes" id="UP000000437">
    <property type="component" value="Chromosome 4"/>
</dbReference>
<dbReference type="GO" id="GO:0005737">
    <property type="term" value="C:cytoplasm"/>
    <property type="evidence" value="ECO:0000318"/>
    <property type="project" value="GO_Central"/>
</dbReference>
<dbReference type="GO" id="GO:0005634">
    <property type="term" value="C:nucleus"/>
    <property type="evidence" value="ECO:0000250"/>
    <property type="project" value="UniProtKB"/>
</dbReference>
<dbReference type="GO" id="GO:0004843">
    <property type="term" value="F:cysteine-type deubiquitinase activity"/>
    <property type="evidence" value="ECO:0000250"/>
    <property type="project" value="UniProtKB"/>
</dbReference>
<dbReference type="GO" id="GO:0008270">
    <property type="term" value="F:zinc ion binding"/>
    <property type="evidence" value="ECO:0007669"/>
    <property type="project" value="UniProtKB-KW"/>
</dbReference>
<dbReference type="GO" id="GO:0051301">
    <property type="term" value="P:cell division"/>
    <property type="evidence" value="ECO:0007669"/>
    <property type="project" value="UniProtKB-KW"/>
</dbReference>
<dbReference type="GO" id="GO:0021551">
    <property type="term" value="P:central nervous system morphogenesis"/>
    <property type="evidence" value="ECO:0000315"/>
    <property type="project" value="ZFIN"/>
</dbReference>
<dbReference type="GO" id="GO:1904888">
    <property type="term" value="P:cranial skeletal system development"/>
    <property type="evidence" value="ECO:0000315"/>
    <property type="project" value="ZFIN"/>
</dbReference>
<dbReference type="GO" id="GO:1904667">
    <property type="term" value="P:negative regulation of ubiquitin protein ligase activity"/>
    <property type="evidence" value="ECO:0000250"/>
    <property type="project" value="UniProtKB"/>
</dbReference>
<dbReference type="GO" id="GO:0016579">
    <property type="term" value="P:protein deubiquitination"/>
    <property type="evidence" value="ECO:0000250"/>
    <property type="project" value="UniProtKB"/>
</dbReference>
<dbReference type="GO" id="GO:0006508">
    <property type="term" value="P:proteolysis"/>
    <property type="evidence" value="ECO:0007669"/>
    <property type="project" value="UniProtKB-KW"/>
</dbReference>
<dbReference type="FunFam" id="3.30.40.10:FF:000067">
    <property type="entry name" value="Ubiquitinyl hydrolase 1"/>
    <property type="match status" value="1"/>
</dbReference>
<dbReference type="Gene3D" id="3.90.70.10">
    <property type="entry name" value="Cysteine proteinases"/>
    <property type="match status" value="1"/>
</dbReference>
<dbReference type="Gene3D" id="3.30.40.10">
    <property type="entry name" value="Zinc/RING finger domain, C3HC4 (zinc finger)"/>
    <property type="match status" value="1"/>
</dbReference>
<dbReference type="InterPro" id="IPR038765">
    <property type="entry name" value="Papain-like_cys_pep_sf"/>
</dbReference>
<dbReference type="InterPro" id="IPR001394">
    <property type="entry name" value="Peptidase_C19_UCH"/>
</dbReference>
<dbReference type="InterPro" id="IPR050185">
    <property type="entry name" value="Ub_carboxyl-term_hydrolase"/>
</dbReference>
<dbReference type="InterPro" id="IPR018200">
    <property type="entry name" value="USP_CS"/>
</dbReference>
<dbReference type="InterPro" id="IPR028889">
    <property type="entry name" value="USP_dom"/>
</dbReference>
<dbReference type="InterPro" id="IPR013083">
    <property type="entry name" value="Znf_RING/FYVE/PHD"/>
</dbReference>
<dbReference type="InterPro" id="IPR001607">
    <property type="entry name" value="Znf_UBP"/>
</dbReference>
<dbReference type="PANTHER" id="PTHR21646">
    <property type="entry name" value="UBIQUITIN CARBOXYL-TERMINAL HYDROLASE"/>
    <property type="match status" value="1"/>
</dbReference>
<dbReference type="PANTHER" id="PTHR21646:SF5">
    <property type="entry name" value="UBIQUITIN CARBOXYL-TERMINAL HYDROLASE-RELATED"/>
    <property type="match status" value="1"/>
</dbReference>
<dbReference type="Pfam" id="PF00443">
    <property type="entry name" value="UCH"/>
    <property type="match status" value="1"/>
</dbReference>
<dbReference type="Pfam" id="PF02148">
    <property type="entry name" value="zf-UBP"/>
    <property type="match status" value="1"/>
</dbReference>
<dbReference type="SMART" id="SM00290">
    <property type="entry name" value="ZnF_UBP"/>
    <property type="match status" value="1"/>
</dbReference>
<dbReference type="SUPFAM" id="SSF54001">
    <property type="entry name" value="Cysteine proteinases"/>
    <property type="match status" value="1"/>
</dbReference>
<dbReference type="SUPFAM" id="SSF57850">
    <property type="entry name" value="RING/U-box"/>
    <property type="match status" value="1"/>
</dbReference>
<dbReference type="PROSITE" id="PS00972">
    <property type="entry name" value="USP_1"/>
    <property type="match status" value="1"/>
</dbReference>
<dbReference type="PROSITE" id="PS00973">
    <property type="entry name" value="USP_2"/>
    <property type="match status" value="1"/>
</dbReference>
<dbReference type="PROSITE" id="PS50235">
    <property type="entry name" value="USP_3"/>
    <property type="match status" value="1"/>
</dbReference>
<dbReference type="PROSITE" id="PS50271">
    <property type="entry name" value="ZF_UBP"/>
    <property type="match status" value="1"/>
</dbReference>
<gene>
    <name type="primary">usp44</name>
    <name type="ORF">zgc:55661</name>
</gene>
<comment type="function">
    <text evidence="1">Deubiquitinase that plays a key role in the spindle assembly checkpoint by preventing premature anaphase onset. Acts by specifically mediating deubiquitination of cdc20, a negative regulator of the anaphase promoting complex/cyclosome (APC/C) (By similarity).</text>
</comment>
<comment type="catalytic activity">
    <reaction>
        <text>Thiol-dependent hydrolysis of ester, thioester, amide, peptide and isopeptide bonds formed by the C-terminal Gly of ubiquitin (a 76-residue protein attached to proteins as an intracellular targeting signal).</text>
        <dbReference type="EC" id="3.4.19.12"/>
    </reaction>
</comment>
<comment type="subcellular location">
    <subcellularLocation>
        <location evidence="1">Nucleus</location>
    </subcellularLocation>
</comment>
<comment type="similarity">
    <text evidence="6">Belongs to the peptidase C19 family. USP44 subfamily.</text>
</comment>
<accession>Q7ZUM8</accession>
<proteinExistence type="evidence at transcript level"/>
<protein>
    <recommendedName>
        <fullName>Ubiquitin carboxyl-terminal hydrolase 44</fullName>
        <ecNumber>3.4.19.12</ecNumber>
    </recommendedName>
    <alternativeName>
        <fullName>Deubiquitinating enzyme 44</fullName>
    </alternativeName>
    <alternativeName>
        <fullName>Ubiquitin thioesterase 44</fullName>
    </alternativeName>
    <alternativeName>
        <fullName>Ubiquitin-specific-processing protease 44</fullName>
    </alternativeName>
</protein>
<organism>
    <name type="scientific">Danio rerio</name>
    <name type="common">Zebrafish</name>
    <name type="synonym">Brachydanio rerio</name>
    <dbReference type="NCBI Taxonomy" id="7955"/>
    <lineage>
        <taxon>Eukaryota</taxon>
        <taxon>Metazoa</taxon>
        <taxon>Chordata</taxon>
        <taxon>Craniata</taxon>
        <taxon>Vertebrata</taxon>
        <taxon>Euteleostomi</taxon>
        <taxon>Actinopterygii</taxon>
        <taxon>Neopterygii</taxon>
        <taxon>Teleostei</taxon>
        <taxon>Ostariophysi</taxon>
        <taxon>Cypriniformes</taxon>
        <taxon>Danionidae</taxon>
        <taxon>Danioninae</taxon>
        <taxon>Danio</taxon>
    </lineage>
</organism>
<reference key="1">
    <citation type="submission" date="2003-03" db="EMBL/GenBank/DDBJ databases">
        <authorList>
            <consortium name="NIH - Zebrafish Gene Collection (ZGC) project"/>
        </authorList>
    </citation>
    <scope>NUCLEOTIDE SEQUENCE [LARGE SCALE MRNA]</scope>
    <source>
        <strain>AB</strain>
    </source>
</reference>
<sequence length="695" mass="79926">MDRCKHVGRLRLAQDHSILNPQKWHCVDCNTTESVWACLSCSHVACGRYIEEHALQHFKEQHHPLALEVNELYVYCYLCDDYVLNDNATGDLKLLRSTLSAIKSQCYEVTTRSGRTLRSSSANGDQLSPSTQELQLRDEDRMFTALWHRRRALIGRLFRLWFAQTERGKKRLEEERQQEEEEERKREARERRRQLKRQLKEELESAPPRKSHRIRRQSLKATSVKPARAPAKSTKSVRRRSAPARVSTPTPRTPRERTPQQRPRPQAKAKRPQAPPSKTGDSPVKRRPTVTPGVTGLRNLGNTCYMNSILQVLSHLHVFRECFLRLDLNQALELLASAVSRKLGLSAQRVIQPKGLNQGSGLSGGASRSRNMELIQPKEPSSKHISLCHELHTLFPVMWSGKWALVSPFAMLHSVWQLIPAFRGYAQQDAQEFLCELLDKVQHELERTRTLTPATVPANQRRLIKQVLSVVNTIFHGQLLSQVRCLACDHRSNTIEPFWDLSLEFPERYHSNSKDAAQVPCGLTEMLAKFTETEALEGAIYACDYCNNKRRRFCSKQVVLTEAQKQLMVHKLPHVLRLHLKRFRWSGRNHREKIGVHVQFEQELNMEPYCCKDSGNLPHPQHFLYQLSAVVMHHGKGFGSGHYTAFCYNTEGGFWVHCNDSKLSVCAVEEVCKAQAYILFYTQRNAQDKSKESDL</sequence>
<name>UBP44_DANRE</name>
<keyword id="KW-0131">Cell cycle</keyword>
<keyword id="KW-0132">Cell division</keyword>
<keyword id="KW-0378">Hydrolase</keyword>
<keyword id="KW-0479">Metal-binding</keyword>
<keyword id="KW-0498">Mitosis</keyword>
<keyword id="KW-0539">Nucleus</keyword>
<keyword id="KW-0645">Protease</keyword>
<keyword id="KW-1185">Reference proteome</keyword>
<keyword id="KW-0788">Thiol protease</keyword>
<keyword id="KW-0833">Ubl conjugation pathway</keyword>
<keyword id="KW-0862">Zinc</keyword>
<keyword id="KW-0863">Zinc-finger</keyword>